<name>FH5_ORYSJ</name>
<keyword id="KW-0025">Alternative splicing</keyword>
<keyword id="KW-0378">Hydrolase</keyword>
<keyword id="KW-0904">Protein phosphatase</keyword>
<keyword id="KW-1185">Reference proteome</keyword>
<feature type="chain" id="PRO_0000319009" description="Formin-like protein 5">
    <location>
        <begin position="1"/>
        <end position="1627"/>
    </location>
</feature>
<feature type="domain" description="Phosphatase tensin-type" evidence="2">
    <location>
        <begin position="5"/>
        <end position="194"/>
    </location>
</feature>
<feature type="domain" description="C2 tensin-type" evidence="1">
    <location>
        <begin position="200"/>
        <end position="337"/>
    </location>
</feature>
<feature type="domain" description="FH2" evidence="3">
    <location>
        <begin position="1188"/>
        <end position="1588"/>
    </location>
</feature>
<feature type="region of interest" description="Disordered" evidence="4">
    <location>
        <begin position="370"/>
        <end position="413"/>
    </location>
</feature>
<feature type="region of interest" description="Disordered" evidence="4">
    <location>
        <begin position="680"/>
        <end position="787"/>
    </location>
</feature>
<feature type="region of interest" description="Disordered" evidence="4">
    <location>
        <begin position="801"/>
        <end position="1181"/>
    </location>
</feature>
<feature type="region of interest" description="Disordered" evidence="4">
    <location>
        <begin position="1241"/>
        <end position="1261"/>
    </location>
</feature>
<feature type="region of interest" description="Disordered" evidence="4">
    <location>
        <begin position="1571"/>
        <end position="1627"/>
    </location>
</feature>
<feature type="compositionally biased region" description="Basic and acidic residues" evidence="4">
    <location>
        <begin position="402"/>
        <end position="413"/>
    </location>
</feature>
<feature type="compositionally biased region" description="Basic and acidic residues" evidence="4">
    <location>
        <begin position="681"/>
        <end position="691"/>
    </location>
</feature>
<feature type="compositionally biased region" description="Basic and acidic residues" evidence="4">
    <location>
        <begin position="700"/>
        <end position="717"/>
    </location>
</feature>
<feature type="compositionally biased region" description="Basic and acidic residues" evidence="4">
    <location>
        <begin position="726"/>
        <end position="742"/>
    </location>
</feature>
<feature type="compositionally biased region" description="Pro residues" evidence="4">
    <location>
        <begin position="824"/>
        <end position="835"/>
    </location>
</feature>
<feature type="compositionally biased region" description="Pro residues" evidence="4">
    <location>
        <begin position="852"/>
        <end position="870"/>
    </location>
</feature>
<feature type="compositionally biased region" description="Pro residues" evidence="4">
    <location>
        <begin position="877"/>
        <end position="886"/>
    </location>
</feature>
<feature type="compositionally biased region" description="Pro residues" evidence="4">
    <location>
        <begin position="897"/>
        <end position="908"/>
    </location>
</feature>
<feature type="compositionally biased region" description="Pro residues" evidence="4">
    <location>
        <begin position="931"/>
        <end position="965"/>
    </location>
</feature>
<feature type="compositionally biased region" description="Pro residues" evidence="4">
    <location>
        <begin position="974"/>
        <end position="1168"/>
    </location>
</feature>
<feature type="compositionally biased region" description="Basic and acidic residues" evidence="4">
    <location>
        <begin position="1248"/>
        <end position="1261"/>
    </location>
</feature>
<feature type="compositionally biased region" description="Basic and acidic residues" evidence="4">
    <location>
        <begin position="1571"/>
        <end position="1590"/>
    </location>
</feature>
<feature type="compositionally biased region" description="Polar residues" evidence="4">
    <location>
        <begin position="1600"/>
        <end position="1611"/>
    </location>
</feature>
<feature type="compositionally biased region" description="Basic and acidic residues" evidence="4">
    <location>
        <begin position="1612"/>
        <end position="1627"/>
    </location>
</feature>
<feature type="active site" description="Phosphocysteine intermediate" evidence="2">
    <location>
        <position position="127"/>
    </location>
</feature>
<feature type="splice variant" id="VSP_031340" description="In isoform 2." evidence="5">
    <original>DSKPSNPSRQVKQTPDTKTRAASRRGKDVG</original>
    <variation>VLILDLYLWQLQPTSYIHRIYKIQNLLTGL</variation>
    <location>
        <begin position="1598"/>
        <end position="1627"/>
    </location>
</feature>
<feature type="sequence conflict" description="In Ref. 4; AK120222." evidence="5" ref="4">
    <original>P</original>
    <variation>R</variation>
    <location>
        <position position="935"/>
    </location>
</feature>
<feature type="sequence conflict" description="In Ref. 4; AK120222." evidence="5" ref="4">
    <location>
        <position position="1260"/>
    </location>
</feature>
<accession>Q84ZL0</accession>
<accession>Q0D4Y8</accession>
<evidence type="ECO:0000255" key="1">
    <source>
        <dbReference type="PROSITE-ProRule" id="PRU00589"/>
    </source>
</evidence>
<evidence type="ECO:0000255" key="2">
    <source>
        <dbReference type="PROSITE-ProRule" id="PRU00590"/>
    </source>
</evidence>
<evidence type="ECO:0000255" key="3">
    <source>
        <dbReference type="PROSITE-ProRule" id="PRU00774"/>
    </source>
</evidence>
<evidence type="ECO:0000256" key="4">
    <source>
        <dbReference type="SAM" id="MobiDB-lite"/>
    </source>
</evidence>
<evidence type="ECO:0000305" key="5"/>
<gene>
    <name type="primary">FH5</name>
    <name type="ordered locus">Os07g0596300</name>
    <name type="ordered locus">LOC_Os07g40510/LOC_Os07g40520</name>
    <name type="ORF">P0453E05.107</name>
</gene>
<proteinExistence type="evidence at transcript level"/>
<reference key="1">
    <citation type="journal article" date="2005" name="Nature">
        <title>The map-based sequence of the rice genome.</title>
        <authorList>
            <consortium name="International rice genome sequencing project (IRGSP)"/>
        </authorList>
    </citation>
    <scope>NUCLEOTIDE SEQUENCE [LARGE SCALE GENOMIC DNA]</scope>
    <source>
        <strain>cv. Nipponbare</strain>
    </source>
</reference>
<reference key="2">
    <citation type="journal article" date="2008" name="Nucleic Acids Res.">
        <title>The rice annotation project database (RAP-DB): 2008 update.</title>
        <authorList>
            <consortium name="The rice annotation project (RAP)"/>
        </authorList>
    </citation>
    <scope>GENOME REANNOTATION</scope>
    <source>
        <strain>cv. Nipponbare</strain>
    </source>
</reference>
<reference key="3">
    <citation type="journal article" date="2013" name="Rice">
        <title>Improvement of the Oryza sativa Nipponbare reference genome using next generation sequence and optical map data.</title>
        <authorList>
            <person name="Kawahara Y."/>
            <person name="de la Bastide M."/>
            <person name="Hamilton J.P."/>
            <person name="Kanamori H."/>
            <person name="McCombie W.R."/>
            <person name="Ouyang S."/>
            <person name="Schwartz D.C."/>
            <person name="Tanaka T."/>
            <person name="Wu J."/>
            <person name="Zhou S."/>
            <person name="Childs K.L."/>
            <person name="Davidson R.M."/>
            <person name="Lin H."/>
            <person name="Quesada-Ocampo L."/>
            <person name="Vaillancourt B."/>
            <person name="Sakai H."/>
            <person name="Lee S.S."/>
            <person name="Kim J."/>
            <person name="Numa H."/>
            <person name="Itoh T."/>
            <person name="Buell C.R."/>
            <person name="Matsumoto T."/>
        </authorList>
    </citation>
    <scope>GENOME REANNOTATION</scope>
    <source>
        <strain>cv. Nipponbare</strain>
    </source>
</reference>
<reference key="4">
    <citation type="journal article" date="2003" name="Science">
        <title>Collection, mapping, and annotation of over 28,000 cDNA clones from japonica rice.</title>
        <authorList>
            <consortium name="The rice full-length cDNA consortium"/>
        </authorList>
    </citation>
    <scope>NUCLEOTIDE SEQUENCE [LARGE SCALE MRNA] OF 874-1627 (ISOFORM 1)</scope>
    <source>
        <strain>cv. Nipponbare</strain>
    </source>
</reference>
<reference key="5">
    <citation type="journal article" date="2004" name="BMC Genomics">
        <title>Formin homology 2 domains occur in multiple contexts in angiosperms.</title>
        <authorList>
            <person name="Cvrckova F."/>
            <person name="Novotny M."/>
            <person name="Pickova D."/>
            <person name="Zarsky V."/>
        </authorList>
    </citation>
    <scope>GENE FAMILY</scope>
    <scope>NOMENCLATURE</scope>
</reference>
<sequence>MALFRKFFLKKTPDRLLEISERVYVFDCCFSTDSMGEDEYRDYLSGIVAQLQDYFPDASFMVSNFWSGDKRSRISDILSEYDMTVMDYPQQYEGCPLLQLEMIHHFLKSCENWLSVEGQHNMLLMHCERGGWPVLAFMLAGLLLYRKTYTGEQKTLEMVYKQARRDFIQQFFPLNPQSSHMRYLHYITRQGSGPEKPPISRPLILDSIVLHVVPRFDAEGGCRPYLRVHGQDSSSSNKSAKVLYEMPKTKKHLQRYGQAEVPVKVGAFCRVQGDVVLECIHIGDNLDHEEIMFRVMFNTAFIQSNILGLNRDDIDVSWNSNNQFPRDFRAEVVFSDPGSFKPAAATVEEVDDDGDETDVASVDTGEEFYEAEEDWHDARRDPETQSTDGRTSIGDAELDGGVSREDSGSLEKHRADEDVKIVISQNLGCMSDRPVSAPAEILGNPGGLQQACENEEMPKLSNRSDQDDNAVQDIQVVAASVDSEGHKFGSICQKEDMKGVIAQTLVTAIDPSCSDEVQCQPDESAKILKYPNLDYTGFSSPRTLSSVDEDTRLGTIPNVALQNADVKIITESTVIVDNELVIYEEKTIVDNGNLTQEVKNVVNEESTTPKLDRSVIESVDSQDNKNHKMEVAKAADTTDSKMEQTKLKSGLEDAISLKKTTVQGSIVVLPATEIATKIKTKREESGGRRDVGISLPQSKIEARAKSPRISSDRRQIPDKVVPSKKMPVDHAPEAVLLEEKLGNSDQSQEQPKAVKPKTVRRWISPNKESETTSVHRPSHPPSRYDSSPAALAIHSMHTNNKFNVGKDAPLVSSGAQAVPKIQAAPPPPPPPPPPYASSSSLSMHMGSATKQQPPPPPPPPPLPPPPPPPASSGLSSIPPPPPPPPLMSFGAQTRTFVPPPPPPPPPPRSGVGGNTPPAPPPPPLRSTVPAISPPPPPPPPPLKPSSGAPCPPPPPPPPPPPPPSAPSSRAFSSAPPPPPPPPLLRSVPPPPPPPPISHSNAPPPPPLPAARFNAPPPPPPPPTTHFNAPPPPPPPPITRSGAPPSPPPPPSPPPPPPPPGARPGPPPPPPPPGARPGPPPPPPPPGGRPSAPPLPPPGGRASAPPPPPPPSTRLGAPPPPPPPGAGGRAPPPPPAPGGRLGGPPPPPPPGGRAPPPPRGPGAPPPPGGNPSSLIGRGRGVVRASGSGFGAAAARKSTLKPLHWIKVTRALQGSLWEELQRNDDSQSVSEFDLSELESLFPAAVPKPNDSSKSDSRRKSLGSKPEKVHLIELRRANNTEIMLTKVKMPLPDLVSAALALDQSTLDVDQVENLIKFCPTKEEMELLKNYTGDKENLGKCEQFFLELMKVPRMESKLRVFSFKIQFGSQVADLRKSLNTIDSSCDEIRSSLKLKEIMKKILLLGNTLNQGTARGAAVGFRLDSLLKLTDTRATNNKMTLMHYLCKVLAAKSSQLLDFYMDLVSLEATSKIQLKMLAEEMQAVSKGLEKVQLEYNASESDGPVSEIFREKLKEFTDNAGADVQSLSSLFSEVGKKADALIKYFGEDPVRCPFEQVISTLLTFVTMFRKAHEENRKQAELDKKRAEKEAEAEKSKAQLASKNDSKPSNPSRQVKQTPDTKTRAASRRGKDVG</sequence>
<organism>
    <name type="scientific">Oryza sativa subsp. japonica</name>
    <name type="common">Rice</name>
    <dbReference type="NCBI Taxonomy" id="39947"/>
    <lineage>
        <taxon>Eukaryota</taxon>
        <taxon>Viridiplantae</taxon>
        <taxon>Streptophyta</taxon>
        <taxon>Embryophyta</taxon>
        <taxon>Tracheophyta</taxon>
        <taxon>Spermatophyta</taxon>
        <taxon>Magnoliopsida</taxon>
        <taxon>Liliopsida</taxon>
        <taxon>Poales</taxon>
        <taxon>Poaceae</taxon>
        <taxon>BOP clade</taxon>
        <taxon>Oryzoideae</taxon>
        <taxon>Oryzeae</taxon>
        <taxon>Oryzinae</taxon>
        <taxon>Oryza</taxon>
        <taxon>Oryza sativa</taxon>
    </lineage>
</organism>
<dbReference type="EMBL" id="AP004275">
    <property type="protein sequence ID" value="BAC55695.1"/>
    <property type="molecule type" value="Genomic_DNA"/>
</dbReference>
<dbReference type="EMBL" id="AP008213">
    <property type="protein sequence ID" value="BAF22085.2"/>
    <property type="status" value="ALT_SEQ"/>
    <property type="molecule type" value="Genomic_DNA"/>
</dbReference>
<dbReference type="EMBL" id="AP014963">
    <property type="status" value="NOT_ANNOTATED_CDS"/>
    <property type="molecule type" value="Genomic_DNA"/>
</dbReference>
<dbReference type="EMBL" id="AK120222">
    <property type="status" value="NOT_ANNOTATED_CDS"/>
    <property type="molecule type" value="mRNA"/>
</dbReference>
<dbReference type="RefSeq" id="XP_015646968.1">
    <property type="nucleotide sequence ID" value="XM_015791482.1"/>
</dbReference>
<dbReference type="SMR" id="Q84ZL0"/>
<dbReference type="FunCoup" id="Q84ZL0">
    <property type="interactions" value="2"/>
</dbReference>
<dbReference type="STRING" id="39947.Q84ZL0"/>
<dbReference type="PaxDb" id="39947-Q84ZL0"/>
<dbReference type="EnsemblPlants" id="Os07t0596300-02">
    <molecule id="Q84ZL0-1"/>
    <property type="protein sequence ID" value="Os07t0596300-02"/>
    <property type="gene ID" value="Os07g0596300"/>
</dbReference>
<dbReference type="Gramene" id="Os07t0596300-02">
    <molecule id="Q84ZL0-1"/>
    <property type="protein sequence ID" value="Os07t0596300-02"/>
    <property type="gene ID" value="Os07g0596300"/>
</dbReference>
<dbReference type="KEGG" id="dosa:Os07g0596300"/>
<dbReference type="eggNOG" id="KOG1922">
    <property type="taxonomic scope" value="Eukaryota"/>
</dbReference>
<dbReference type="HOGENOM" id="CLU_028505_3_0_1"/>
<dbReference type="InParanoid" id="Q84ZL0"/>
<dbReference type="OrthoDB" id="1668162at2759"/>
<dbReference type="Proteomes" id="UP000000763">
    <property type="component" value="Chromosome 7"/>
</dbReference>
<dbReference type="Proteomes" id="UP000059680">
    <property type="component" value="Chromosome 7"/>
</dbReference>
<dbReference type="ExpressionAtlas" id="Q84ZL0">
    <property type="expression patterns" value="baseline and differential"/>
</dbReference>
<dbReference type="GO" id="GO:0004721">
    <property type="term" value="F:phosphoprotein phosphatase activity"/>
    <property type="evidence" value="ECO:0007669"/>
    <property type="project" value="UniProtKB-KW"/>
</dbReference>
<dbReference type="Gene3D" id="2.60.40.1110">
    <property type="match status" value="1"/>
</dbReference>
<dbReference type="Gene3D" id="1.20.58.2220">
    <property type="entry name" value="Formin, FH2 domain"/>
    <property type="match status" value="1"/>
</dbReference>
<dbReference type="Gene3D" id="3.90.190.10">
    <property type="entry name" value="Protein tyrosine phosphatase superfamily"/>
    <property type="match status" value="1"/>
</dbReference>
<dbReference type="InterPro" id="IPR035892">
    <property type="entry name" value="C2_domain_sf"/>
</dbReference>
<dbReference type="InterPro" id="IPR015425">
    <property type="entry name" value="FH2_Formin"/>
</dbReference>
<dbReference type="InterPro" id="IPR042201">
    <property type="entry name" value="FH2_Formin_sf"/>
</dbReference>
<dbReference type="InterPro" id="IPR051144">
    <property type="entry name" value="Formin_homology_domain"/>
</dbReference>
<dbReference type="InterPro" id="IPR029021">
    <property type="entry name" value="Prot-tyrosine_phosphatase-like"/>
</dbReference>
<dbReference type="InterPro" id="IPR014020">
    <property type="entry name" value="Tensin_C2-dom"/>
</dbReference>
<dbReference type="PANTHER" id="PTHR45733">
    <property type="entry name" value="FORMIN-J"/>
    <property type="match status" value="1"/>
</dbReference>
<dbReference type="PANTHER" id="PTHR45733:SF10">
    <property type="entry name" value="FORMIN-LIKE PROTEIN 15A-RELATED"/>
    <property type="match status" value="1"/>
</dbReference>
<dbReference type="Pfam" id="PF02181">
    <property type="entry name" value="FH2"/>
    <property type="match status" value="1"/>
</dbReference>
<dbReference type="Pfam" id="PF10409">
    <property type="entry name" value="PTEN_C2"/>
    <property type="match status" value="1"/>
</dbReference>
<dbReference type="SMART" id="SM00498">
    <property type="entry name" value="FH2"/>
    <property type="match status" value="1"/>
</dbReference>
<dbReference type="SMART" id="SM01326">
    <property type="entry name" value="PTEN_C2"/>
    <property type="match status" value="1"/>
</dbReference>
<dbReference type="SUPFAM" id="SSF52799">
    <property type="entry name" value="(Phosphotyrosine protein) phosphatases II"/>
    <property type="match status" value="1"/>
</dbReference>
<dbReference type="SUPFAM" id="SSF49562">
    <property type="entry name" value="C2 domain (Calcium/lipid-binding domain, CaLB)"/>
    <property type="match status" value="1"/>
</dbReference>
<dbReference type="SUPFAM" id="SSF101447">
    <property type="entry name" value="Formin homology 2 domain (FH2 domain)"/>
    <property type="match status" value="1"/>
</dbReference>
<dbReference type="PROSITE" id="PS51182">
    <property type="entry name" value="C2_TENSIN"/>
    <property type="match status" value="1"/>
</dbReference>
<dbReference type="PROSITE" id="PS51444">
    <property type="entry name" value="FH2"/>
    <property type="match status" value="1"/>
</dbReference>
<dbReference type="PROSITE" id="PS51181">
    <property type="entry name" value="PPASE_TENSIN"/>
    <property type="match status" value="1"/>
</dbReference>
<comment type="alternative products">
    <event type="alternative splicing"/>
    <isoform>
        <id>Q84ZL0-1</id>
        <name>1</name>
        <sequence type="displayed"/>
    </isoform>
    <isoform>
        <id>Q84ZL0-2</id>
        <name>2</name>
        <sequence type="described" ref="VSP_031340"/>
    </isoform>
</comment>
<comment type="similarity">
    <text evidence="5">Belongs to the formin-like family. Class-II subfamily.</text>
</comment>
<comment type="sequence caution" evidence="5">
    <conflict type="erroneous gene model prediction">
        <sequence resource="EMBL-CDS" id="BAF22085"/>
    </conflict>
</comment>
<protein>
    <recommendedName>
        <fullName>Formin-like protein 5</fullName>
    </recommendedName>
    <alternativeName>
        <fullName>OsFH5</fullName>
    </alternativeName>
</protein>